<name>RLME_KLEP3</name>
<feature type="chain" id="PRO_1000195001" description="Ribosomal RNA large subunit methyltransferase E">
    <location>
        <begin position="1"/>
        <end position="209"/>
    </location>
</feature>
<feature type="active site" description="Proton acceptor" evidence="1">
    <location>
        <position position="164"/>
    </location>
</feature>
<feature type="binding site" evidence="1">
    <location>
        <position position="63"/>
    </location>
    <ligand>
        <name>S-adenosyl-L-methionine</name>
        <dbReference type="ChEBI" id="CHEBI:59789"/>
    </ligand>
</feature>
<feature type="binding site" evidence="1">
    <location>
        <position position="65"/>
    </location>
    <ligand>
        <name>S-adenosyl-L-methionine</name>
        <dbReference type="ChEBI" id="CHEBI:59789"/>
    </ligand>
</feature>
<feature type="binding site" evidence="1">
    <location>
        <position position="83"/>
    </location>
    <ligand>
        <name>S-adenosyl-L-methionine</name>
        <dbReference type="ChEBI" id="CHEBI:59789"/>
    </ligand>
</feature>
<feature type="binding site" evidence="1">
    <location>
        <position position="99"/>
    </location>
    <ligand>
        <name>S-adenosyl-L-methionine</name>
        <dbReference type="ChEBI" id="CHEBI:59789"/>
    </ligand>
</feature>
<feature type="binding site" evidence="1">
    <location>
        <position position="124"/>
    </location>
    <ligand>
        <name>S-adenosyl-L-methionine</name>
        <dbReference type="ChEBI" id="CHEBI:59789"/>
    </ligand>
</feature>
<protein>
    <recommendedName>
        <fullName evidence="1">Ribosomal RNA large subunit methyltransferase E</fullName>
        <ecNumber evidence="1">2.1.1.166</ecNumber>
    </recommendedName>
    <alternativeName>
        <fullName evidence="1">23S rRNA Um2552 methyltransferase</fullName>
    </alternativeName>
    <alternativeName>
        <fullName evidence="1">rRNA (uridine-2'-O-)-methyltransferase</fullName>
    </alternativeName>
</protein>
<reference key="1">
    <citation type="journal article" date="2008" name="PLoS Genet.">
        <title>Complete genome sequence of the N2-fixing broad host range endophyte Klebsiella pneumoniae 342 and virulence predictions verified in mice.</title>
        <authorList>
            <person name="Fouts D.E."/>
            <person name="Tyler H.L."/>
            <person name="DeBoy R.T."/>
            <person name="Daugherty S."/>
            <person name="Ren Q."/>
            <person name="Badger J.H."/>
            <person name="Durkin A.S."/>
            <person name="Huot H."/>
            <person name="Shrivastava S."/>
            <person name="Kothari S."/>
            <person name="Dodson R.J."/>
            <person name="Mohamoud Y."/>
            <person name="Khouri H."/>
            <person name="Roesch L.F.W."/>
            <person name="Krogfelt K.A."/>
            <person name="Struve C."/>
            <person name="Triplett E.W."/>
            <person name="Methe B.A."/>
        </authorList>
    </citation>
    <scope>NUCLEOTIDE SEQUENCE [LARGE SCALE GENOMIC DNA]</scope>
    <source>
        <strain>342</strain>
    </source>
</reference>
<accession>B5XSW2</accession>
<organism>
    <name type="scientific">Klebsiella pneumoniae (strain 342)</name>
    <dbReference type="NCBI Taxonomy" id="507522"/>
    <lineage>
        <taxon>Bacteria</taxon>
        <taxon>Pseudomonadati</taxon>
        <taxon>Pseudomonadota</taxon>
        <taxon>Gammaproteobacteria</taxon>
        <taxon>Enterobacterales</taxon>
        <taxon>Enterobacteriaceae</taxon>
        <taxon>Klebsiella/Raoultella group</taxon>
        <taxon>Klebsiella</taxon>
        <taxon>Klebsiella pneumoniae complex</taxon>
    </lineage>
</organism>
<proteinExistence type="inferred from homology"/>
<gene>
    <name evidence="1" type="primary">rlmE</name>
    <name evidence="1" type="synonym">ftsJ</name>
    <name evidence="1" type="synonym">rrmJ</name>
    <name type="ordered locus">KPK_0532</name>
</gene>
<sequence length="209" mass="23319">MTGKKRSASSSRWLQEHFSDKYVQQAQKKGLRSRAWFKLDEIQQSDKIFKPGMTIVDLGAAPGGWSQYAVTQIGNSGRIIACDLLPMDPIVGVDFLQGDFRDELVLKALLERVGDSKVQVVMSDMAPNMCGTPAVDIPRAMYLVELALEMSRDVLAPGGSFVVKVFQGEGFDEYLREIRSLFTKVKVRKPDSSRARSREVYIVATGRKP</sequence>
<comment type="function">
    <text evidence="1">Specifically methylates the uridine in position 2552 of 23S rRNA at the 2'-O position of the ribose in the fully assembled 50S ribosomal subunit.</text>
</comment>
<comment type="catalytic activity">
    <reaction evidence="1">
        <text>uridine(2552) in 23S rRNA + S-adenosyl-L-methionine = 2'-O-methyluridine(2552) in 23S rRNA + S-adenosyl-L-homocysteine + H(+)</text>
        <dbReference type="Rhea" id="RHEA:42720"/>
        <dbReference type="Rhea" id="RHEA-COMP:10202"/>
        <dbReference type="Rhea" id="RHEA-COMP:10203"/>
        <dbReference type="ChEBI" id="CHEBI:15378"/>
        <dbReference type="ChEBI" id="CHEBI:57856"/>
        <dbReference type="ChEBI" id="CHEBI:59789"/>
        <dbReference type="ChEBI" id="CHEBI:65315"/>
        <dbReference type="ChEBI" id="CHEBI:74478"/>
        <dbReference type="EC" id="2.1.1.166"/>
    </reaction>
</comment>
<comment type="subcellular location">
    <subcellularLocation>
        <location evidence="1">Cytoplasm</location>
    </subcellularLocation>
</comment>
<comment type="similarity">
    <text evidence="1">Belongs to the class I-like SAM-binding methyltransferase superfamily. RNA methyltransferase RlmE family.</text>
</comment>
<keyword id="KW-0963">Cytoplasm</keyword>
<keyword id="KW-0489">Methyltransferase</keyword>
<keyword id="KW-0698">rRNA processing</keyword>
<keyword id="KW-0949">S-adenosyl-L-methionine</keyword>
<keyword id="KW-0808">Transferase</keyword>
<evidence type="ECO:0000255" key="1">
    <source>
        <dbReference type="HAMAP-Rule" id="MF_01547"/>
    </source>
</evidence>
<dbReference type="EC" id="2.1.1.166" evidence="1"/>
<dbReference type="EMBL" id="CP000964">
    <property type="protein sequence ID" value="ACI08339.1"/>
    <property type="molecule type" value="Genomic_DNA"/>
</dbReference>
<dbReference type="SMR" id="B5XSW2"/>
<dbReference type="KEGG" id="kpe:KPK_0532"/>
<dbReference type="HOGENOM" id="CLU_009422_4_0_6"/>
<dbReference type="Proteomes" id="UP000001734">
    <property type="component" value="Chromosome"/>
</dbReference>
<dbReference type="GO" id="GO:0005737">
    <property type="term" value="C:cytoplasm"/>
    <property type="evidence" value="ECO:0007669"/>
    <property type="project" value="UniProtKB-SubCell"/>
</dbReference>
<dbReference type="GO" id="GO:0008650">
    <property type="term" value="F:rRNA (uridine-2'-O-)-methyltransferase activity"/>
    <property type="evidence" value="ECO:0007669"/>
    <property type="project" value="UniProtKB-UniRule"/>
</dbReference>
<dbReference type="FunFam" id="3.40.50.150:FF:000005">
    <property type="entry name" value="Ribosomal RNA large subunit methyltransferase E"/>
    <property type="match status" value="1"/>
</dbReference>
<dbReference type="Gene3D" id="3.40.50.150">
    <property type="entry name" value="Vaccinia Virus protein VP39"/>
    <property type="match status" value="1"/>
</dbReference>
<dbReference type="HAMAP" id="MF_01547">
    <property type="entry name" value="RNA_methyltr_E"/>
    <property type="match status" value="1"/>
</dbReference>
<dbReference type="InterPro" id="IPR050082">
    <property type="entry name" value="RNA_methyltr_RlmE"/>
</dbReference>
<dbReference type="InterPro" id="IPR002877">
    <property type="entry name" value="RNA_MeTrfase_FtsJ_dom"/>
</dbReference>
<dbReference type="InterPro" id="IPR015507">
    <property type="entry name" value="rRNA-MeTfrase_E"/>
</dbReference>
<dbReference type="InterPro" id="IPR004512">
    <property type="entry name" value="rRNA_MeTrfase_gammaproteobac"/>
</dbReference>
<dbReference type="InterPro" id="IPR029063">
    <property type="entry name" value="SAM-dependent_MTases_sf"/>
</dbReference>
<dbReference type="NCBIfam" id="NF008390">
    <property type="entry name" value="PRK11188.1"/>
    <property type="match status" value="1"/>
</dbReference>
<dbReference type="NCBIfam" id="TIGR00438">
    <property type="entry name" value="rrmJ"/>
    <property type="match status" value="1"/>
</dbReference>
<dbReference type="PANTHER" id="PTHR10920">
    <property type="entry name" value="RIBOSOMAL RNA METHYLTRANSFERASE"/>
    <property type="match status" value="1"/>
</dbReference>
<dbReference type="PANTHER" id="PTHR10920:SF18">
    <property type="entry name" value="RRNA METHYLTRANSFERASE 2, MITOCHONDRIAL"/>
    <property type="match status" value="1"/>
</dbReference>
<dbReference type="Pfam" id="PF01728">
    <property type="entry name" value="FtsJ"/>
    <property type="match status" value="1"/>
</dbReference>
<dbReference type="PIRSF" id="PIRSF005461">
    <property type="entry name" value="23S_rRNA_mtase"/>
    <property type="match status" value="1"/>
</dbReference>
<dbReference type="SUPFAM" id="SSF53335">
    <property type="entry name" value="S-adenosyl-L-methionine-dependent methyltransferases"/>
    <property type="match status" value="1"/>
</dbReference>